<reference key="1">
    <citation type="journal article" date="2008" name="Antimicrob. Agents Chemother.">
        <title>Whole-genome pyrosequencing of an epidemic multidrug-resistant Acinetobacter baumannii strain belonging to the European clone II group.</title>
        <authorList>
            <person name="Iacono M."/>
            <person name="Villa L."/>
            <person name="Fortini D."/>
            <person name="Bordoni R."/>
            <person name="Imperi F."/>
            <person name="Bonnal R.J."/>
            <person name="Sicheritz-Ponten T."/>
            <person name="De Bellis G."/>
            <person name="Visca P."/>
            <person name="Cassone A."/>
            <person name="Carattoli A."/>
        </authorList>
    </citation>
    <scope>NUCLEOTIDE SEQUENCE [LARGE SCALE GENOMIC DNA]</scope>
    <source>
        <strain>ACICU</strain>
    </source>
</reference>
<comment type="function">
    <text evidence="1">Catalyzes the reversible oxidation of malate to oxaloacetate.</text>
</comment>
<comment type="catalytic activity">
    <reaction evidence="1">
        <text>(S)-malate + NAD(+) = oxaloacetate + NADH + H(+)</text>
        <dbReference type="Rhea" id="RHEA:21432"/>
        <dbReference type="ChEBI" id="CHEBI:15378"/>
        <dbReference type="ChEBI" id="CHEBI:15589"/>
        <dbReference type="ChEBI" id="CHEBI:16452"/>
        <dbReference type="ChEBI" id="CHEBI:57540"/>
        <dbReference type="ChEBI" id="CHEBI:57945"/>
        <dbReference type="EC" id="1.1.1.37"/>
    </reaction>
</comment>
<comment type="similarity">
    <text evidence="1">Belongs to the LDH/MDH superfamily. MDH type 2 family.</text>
</comment>
<evidence type="ECO:0000255" key="1">
    <source>
        <dbReference type="HAMAP-Rule" id="MF_01517"/>
    </source>
</evidence>
<organism>
    <name type="scientific">Acinetobacter baumannii (strain ACICU)</name>
    <dbReference type="NCBI Taxonomy" id="405416"/>
    <lineage>
        <taxon>Bacteria</taxon>
        <taxon>Pseudomonadati</taxon>
        <taxon>Pseudomonadota</taxon>
        <taxon>Gammaproteobacteria</taxon>
        <taxon>Moraxellales</taxon>
        <taxon>Moraxellaceae</taxon>
        <taxon>Acinetobacter</taxon>
        <taxon>Acinetobacter calcoaceticus/baumannii complex</taxon>
    </lineage>
</organism>
<proteinExistence type="inferred from homology"/>
<protein>
    <recommendedName>
        <fullName evidence="1">Malate dehydrogenase</fullName>
        <ecNumber evidence="1">1.1.1.37</ecNumber>
    </recommendedName>
</protein>
<feature type="chain" id="PRO_1000191605" description="Malate dehydrogenase">
    <location>
        <begin position="1"/>
        <end position="328"/>
    </location>
</feature>
<feature type="active site" description="Proton acceptor" evidence="1">
    <location>
        <position position="189"/>
    </location>
</feature>
<feature type="binding site" evidence="1">
    <location>
        <begin position="11"/>
        <end position="17"/>
    </location>
    <ligand>
        <name>NAD(+)</name>
        <dbReference type="ChEBI" id="CHEBI:57540"/>
    </ligand>
</feature>
<feature type="binding site" evidence="1">
    <location>
        <position position="94"/>
    </location>
    <ligand>
        <name>substrate</name>
    </ligand>
</feature>
<feature type="binding site" evidence="1">
    <location>
        <position position="100"/>
    </location>
    <ligand>
        <name>substrate</name>
    </ligand>
</feature>
<feature type="binding site" evidence="1">
    <location>
        <position position="107"/>
    </location>
    <ligand>
        <name>NAD(+)</name>
        <dbReference type="ChEBI" id="CHEBI:57540"/>
    </ligand>
</feature>
<feature type="binding site" evidence="1">
    <location>
        <position position="114"/>
    </location>
    <ligand>
        <name>NAD(+)</name>
        <dbReference type="ChEBI" id="CHEBI:57540"/>
    </ligand>
</feature>
<feature type="binding site" evidence="1">
    <location>
        <begin position="131"/>
        <end position="133"/>
    </location>
    <ligand>
        <name>NAD(+)</name>
        <dbReference type="ChEBI" id="CHEBI:57540"/>
    </ligand>
</feature>
<feature type="binding site" evidence="1">
    <location>
        <position position="133"/>
    </location>
    <ligand>
        <name>substrate</name>
    </ligand>
</feature>
<feature type="binding site" evidence="1">
    <location>
        <position position="164"/>
    </location>
    <ligand>
        <name>substrate</name>
    </ligand>
</feature>
<accession>B2HZ52</accession>
<sequence length="328" mass="35323">MKQPVRVAVTGAAGQIGYSLLFRIASGEMLGKDQPVILQLLEVPVEKAQQALKGVMMELDDCAFPLLAGMIGTDDPKVAFKDADYALLVGSRPRGPGMERADLLKVNGEIFIGQGQALNEVASRDVKVLVVGNPANTNAYIAMKSAPDLPAKNFTAMLRLDHNRALTQVAQKAGVAVADIEKLTVWGNHSPTMYADYRFATANGESLKDKINDPAWNKDVFLPTVGKRGAAIIEARGLSSAASAANAAIDHMRDWALGTNGKWVTMGVPSDGSYGIPEGVMFGFPVTTENGEYKIVQGLEIDEFSRERINFTLNELEEERAAIADMVK</sequence>
<dbReference type="EC" id="1.1.1.37" evidence="1"/>
<dbReference type="EMBL" id="CP000863">
    <property type="protein sequence ID" value="ACC58534.1"/>
    <property type="molecule type" value="Genomic_DNA"/>
</dbReference>
<dbReference type="RefSeq" id="WP_000813006.1">
    <property type="nucleotide sequence ID" value="NZ_CP031380.1"/>
</dbReference>
<dbReference type="SMR" id="B2HZ52"/>
<dbReference type="KEGG" id="abc:ACICU_03222"/>
<dbReference type="HOGENOM" id="CLU_040727_2_0_6"/>
<dbReference type="Proteomes" id="UP000008839">
    <property type="component" value="Chromosome"/>
</dbReference>
<dbReference type="GO" id="GO:0030060">
    <property type="term" value="F:L-malate dehydrogenase (NAD+) activity"/>
    <property type="evidence" value="ECO:0007669"/>
    <property type="project" value="UniProtKB-UniRule"/>
</dbReference>
<dbReference type="GO" id="GO:0006108">
    <property type="term" value="P:malate metabolic process"/>
    <property type="evidence" value="ECO:0007669"/>
    <property type="project" value="InterPro"/>
</dbReference>
<dbReference type="GO" id="GO:0006099">
    <property type="term" value="P:tricarboxylic acid cycle"/>
    <property type="evidence" value="ECO:0007669"/>
    <property type="project" value="UniProtKB-UniRule"/>
</dbReference>
<dbReference type="CDD" id="cd01338">
    <property type="entry name" value="MDH_chloroplast-like"/>
    <property type="match status" value="1"/>
</dbReference>
<dbReference type="FunFam" id="3.40.50.720:FF:000010">
    <property type="entry name" value="Malate dehydrogenase"/>
    <property type="match status" value="1"/>
</dbReference>
<dbReference type="FunFam" id="3.90.110.10:FF:000002">
    <property type="entry name" value="Malate dehydrogenase"/>
    <property type="match status" value="1"/>
</dbReference>
<dbReference type="Gene3D" id="3.90.110.10">
    <property type="entry name" value="Lactate dehydrogenase/glycoside hydrolase, family 4, C-terminal"/>
    <property type="match status" value="1"/>
</dbReference>
<dbReference type="Gene3D" id="3.40.50.720">
    <property type="entry name" value="NAD(P)-binding Rossmann-like Domain"/>
    <property type="match status" value="1"/>
</dbReference>
<dbReference type="HAMAP" id="MF_01517">
    <property type="entry name" value="Malate_dehydrog_2"/>
    <property type="match status" value="1"/>
</dbReference>
<dbReference type="InterPro" id="IPR001557">
    <property type="entry name" value="L-lactate/malate_DH"/>
</dbReference>
<dbReference type="InterPro" id="IPR022383">
    <property type="entry name" value="Lactate/malate_DH_C"/>
</dbReference>
<dbReference type="InterPro" id="IPR001236">
    <property type="entry name" value="Lactate/malate_DH_N"/>
</dbReference>
<dbReference type="InterPro" id="IPR015955">
    <property type="entry name" value="Lactate_DH/Glyco_Ohase_4_C"/>
</dbReference>
<dbReference type="InterPro" id="IPR010945">
    <property type="entry name" value="Malate_DH_type2"/>
</dbReference>
<dbReference type="InterPro" id="IPR036291">
    <property type="entry name" value="NAD(P)-bd_dom_sf"/>
</dbReference>
<dbReference type="NCBIfam" id="TIGR01759">
    <property type="entry name" value="MalateDH-SF1"/>
    <property type="match status" value="1"/>
</dbReference>
<dbReference type="NCBIfam" id="NF003916">
    <property type="entry name" value="PRK05442.1"/>
    <property type="match status" value="1"/>
</dbReference>
<dbReference type="PANTHER" id="PTHR23382">
    <property type="entry name" value="MALATE DEHYDROGENASE"/>
    <property type="match status" value="1"/>
</dbReference>
<dbReference type="Pfam" id="PF02866">
    <property type="entry name" value="Ldh_1_C"/>
    <property type="match status" value="1"/>
</dbReference>
<dbReference type="Pfam" id="PF00056">
    <property type="entry name" value="Ldh_1_N"/>
    <property type="match status" value="1"/>
</dbReference>
<dbReference type="PIRSF" id="PIRSF000102">
    <property type="entry name" value="Lac_mal_DH"/>
    <property type="match status" value="1"/>
</dbReference>
<dbReference type="SUPFAM" id="SSF56327">
    <property type="entry name" value="LDH C-terminal domain-like"/>
    <property type="match status" value="1"/>
</dbReference>
<dbReference type="SUPFAM" id="SSF51735">
    <property type="entry name" value="NAD(P)-binding Rossmann-fold domains"/>
    <property type="match status" value="1"/>
</dbReference>
<name>MDH_ACIBC</name>
<keyword id="KW-0520">NAD</keyword>
<keyword id="KW-0560">Oxidoreductase</keyword>
<keyword id="KW-0816">Tricarboxylic acid cycle</keyword>
<gene>
    <name evidence="1" type="primary">mdh</name>
    <name type="ordered locus">ACICU_03222</name>
</gene>